<proteinExistence type="inferred from homology"/>
<protein>
    <recommendedName>
        <fullName>Interferon alpha-2</fullName>
    </recommendedName>
</protein>
<accession>P05004</accession>
<organism>
    <name type="scientific">Equus caballus</name>
    <name type="common">Horse</name>
    <dbReference type="NCBI Taxonomy" id="9796"/>
    <lineage>
        <taxon>Eukaryota</taxon>
        <taxon>Metazoa</taxon>
        <taxon>Chordata</taxon>
        <taxon>Craniata</taxon>
        <taxon>Vertebrata</taxon>
        <taxon>Euteleostomi</taxon>
        <taxon>Mammalia</taxon>
        <taxon>Eutheria</taxon>
        <taxon>Laurasiatheria</taxon>
        <taxon>Perissodactyla</taxon>
        <taxon>Equidae</taxon>
        <taxon>Equus</taxon>
    </lineage>
</organism>
<keyword id="KW-0051">Antiviral defense</keyword>
<keyword id="KW-0202">Cytokine</keyword>
<keyword id="KW-1015">Disulfide bond</keyword>
<keyword id="KW-1185">Reference proteome</keyword>
<keyword id="KW-0964">Secreted</keyword>
<keyword id="KW-0732">Signal</keyword>
<feature type="signal peptide">
    <location>
        <begin position="1"/>
        <end position="23"/>
    </location>
</feature>
<feature type="chain" id="PRO_0000016372" description="Interferon alpha-2">
    <location>
        <begin position="24"/>
        <end position="184"/>
    </location>
</feature>
<feature type="disulfide bond" evidence="1">
    <location>
        <begin position="24"/>
        <end position="122"/>
    </location>
</feature>
<feature type="disulfide bond" evidence="1">
    <location>
        <begin position="52"/>
        <end position="162"/>
    </location>
</feature>
<sequence>MALPFSLLMALVVLSCHSSCSLGCDLPHTHSLGNTRVLMLLGQMRRISPFSCLKDRNDFGFPQEVFDGNQFRKPQAISAVHETIQQIFHLFSTDGSSAAWDESLLDKLYTGLYQQLTELEACLSQEVGVEETPLMNEDSLLAVRRYFQRIALYLQEKKYSPCAWEIVRAEIMRCFSSSTNLQQS</sequence>
<reference key="1">
    <citation type="journal article" date="1986" name="DNA">
        <title>Molecular cloning and expression in Escherichia coli of equine type I interferons.</title>
        <authorList>
            <person name="Himmler A."/>
            <person name="Hauptmann R."/>
            <person name="Adolf G.R."/>
            <person name="Swetly P."/>
        </authorList>
    </citation>
    <scope>NUCLEOTIDE SEQUENCE [GENOMIC DNA]</scope>
    <scope>FUNCTION</scope>
</reference>
<evidence type="ECO:0000250" key="1"/>
<evidence type="ECO:0000269" key="2">
    <source>
    </source>
</evidence>
<evidence type="ECO:0000305" key="3"/>
<comment type="function">
    <text evidence="2">Produced by macrophages, IFN-alpha have antiviral activities.</text>
</comment>
<comment type="subunit">
    <text evidence="1">Interacts with IFNAR2.</text>
</comment>
<comment type="subcellular location">
    <subcellularLocation>
        <location evidence="1">Secreted</location>
    </subcellularLocation>
</comment>
<comment type="similarity">
    <text evidence="3">Belongs to the alpha/beta interferon family.</text>
</comment>
<name>IFNA2_HORSE</name>
<dbReference type="EMBL" id="M14541">
    <property type="protein sequence ID" value="AAA30950.1"/>
    <property type="molecule type" value="Genomic_DNA"/>
</dbReference>
<dbReference type="PIR" id="B24912">
    <property type="entry name" value="IVHOA2"/>
</dbReference>
<dbReference type="SMR" id="P05004"/>
<dbReference type="FunCoup" id="P05004">
    <property type="interactions" value="281"/>
</dbReference>
<dbReference type="STRING" id="9796.ENSECAP00000026656"/>
<dbReference type="PaxDb" id="9796-ENSECAP00000026656"/>
<dbReference type="InParanoid" id="P05004"/>
<dbReference type="Proteomes" id="UP000002281">
    <property type="component" value="Unplaced"/>
</dbReference>
<dbReference type="GO" id="GO:0005615">
    <property type="term" value="C:extracellular space"/>
    <property type="evidence" value="ECO:0000318"/>
    <property type="project" value="GO_Central"/>
</dbReference>
<dbReference type="GO" id="GO:0005125">
    <property type="term" value="F:cytokine activity"/>
    <property type="evidence" value="ECO:0000318"/>
    <property type="project" value="GO_Central"/>
</dbReference>
<dbReference type="GO" id="GO:0005132">
    <property type="term" value="F:type I interferon receptor binding"/>
    <property type="evidence" value="ECO:0000318"/>
    <property type="project" value="GO_Central"/>
</dbReference>
<dbReference type="GO" id="GO:0002250">
    <property type="term" value="P:adaptive immune response"/>
    <property type="evidence" value="ECO:0000318"/>
    <property type="project" value="GO_Central"/>
</dbReference>
<dbReference type="GO" id="GO:0002312">
    <property type="term" value="P:B cell activation involved in immune response"/>
    <property type="evidence" value="ECO:0000318"/>
    <property type="project" value="GO_Central"/>
</dbReference>
<dbReference type="GO" id="GO:0051607">
    <property type="term" value="P:defense response to virus"/>
    <property type="evidence" value="ECO:0007669"/>
    <property type="project" value="UniProtKB-KW"/>
</dbReference>
<dbReference type="GO" id="GO:0006959">
    <property type="term" value="P:humoral immune response"/>
    <property type="evidence" value="ECO:0000318"/>
    <property type="project" value="GO_Central"/>
</dbReference>
<dbReference type="GO" id="GO:0002323">
    <property type="term" value="P:natural killer cell activation involved in immune response"/>
    <property type="evidence" value="ECO:0000318"/>
    <property type="project" value="GO_Central"/>
</dbReference>
<dbReference type="GO" id="GO:0043330">
    <property type="term" value="P:response to exogenous dsRNA"/>
    <property type="evidence" value="ECO:0000318"/>
    <property type="project" value="GO_Central"/>
</dbReference>
<dbReference type="GO" id="GO:0002286">
    <property type="term" value="P:T cell activation involved in immune response"/>
    <property type="evidence" value="ECO:0000318"/>
    <property type="project" value="GO_Central"/>
</dbReference>
<dbReference type="GO" id="GO:0060337">
    <property type="term" value="P:type I interferon-mediated signaling pathway"/>
    <property type="evidence" value="ECO:0000318"/>
    <property type="project" value="GO_Central"/>
</dbReference>
<dbReference type="CDD" id="cd00095">
    <property type="entry name" value="IFab"/>
    <property type="match status" value="1"/>
</dbReference>
<dbReference type="FunFam" id="1.20.1250.10:FF:000001">
    <property type="entry name" value="Interferon alpha"/>
    <property type="match status" value="1"/>
</dbReference>
<dbReference type="Gene3D" id="1.20.1250.10">
    <property type="match status" value="1"/>
</dbReference>
<dbReference type="InterPro" id="IPR009079">
    <property type="entry name" value="4_helix_cytokine-like_core"/>
</dbReference>
<dbReference type="InterPro" id="IPR000471">
    <property type="entry name" value="Interferon_alpha/beta/delta"/>
</dbReference>
<dbReference type="PANTHER" id="PTHR11691:SF60">
    <property type="entry name" value="INTERFERON ALPHA-5"/>
    <property type="match status" value="1"/>
</dbReference>
<dbReference type="PANTHER" id="PTHR11691">
    <property type="entry name" value="TYPE I INTERFERON"/>
    <property type="match status" value="1"/>
</dbReference>
<dbReference type="Pfam" id="PF00143">
    <property type="entry name" value="Interferon"/>
    <property type="match status" value="1"/>
</dbReference>
<dbReference type="PRINTS" id="PR00266">
    <property type="entry name" value="INTERFERONAB"/>
</dbReference>
<dbReference type="SMART" id="SM00076">
    <property type="entry name" value="IFabd"/>
    <property type="match status" value="1"/>
</dbReference>
<dbReference type="SUPFAM" id="SSF47266">
    <property type="entry name" value="4-helical cytokines"/>
    <property type="match status" value="1"/>
</dbReference>
<dbReference type="PROSITE" id="PS00252">
    <property type="entry name" value="INTERFERON_A_B_D"/>
    <property type="match status" value="1"/>
</dbReference>